<gene>
    <name evidence="16" type="primary">HXK1</name>
    <name evidence="15" type="synonym">GIN2</name>
    <name evidence="19" type="ordered locus">At4g29130</name>
    <name evidence="20" type="ORF">F19B15.160</name>
</gene>
<accession>Q42525</accession>
<accession>Q42535</accession>
<reference key="1">
    <citation type="journal article" date="1995" name="Plant Physiol.">
        <title>Arabidopsis thaliana hexokinase cDNA isolated by complementation of yeast cells.</title>
        <authorList>
            <person name="Dai N."/>
            <person name="Schaffer A.A."/>
            <person name="Petreikov M."/>
            <person name="Granot D."/>
        </authorList>
    </citation>
    <scope>NUCLEOTIDE SEQUENCE [MRNA]</scope>
    <scope>CATALYTIC ACTIVITY</scope>
    <scope>BIOPHYSICOCHEMICAL PROPERTIES</scope>
    <source>
        <strain>cv. Landsberg erecta</strain>
    </source>
</reference>
<reference key="2">
    <citation type="journal article" date="1997" name="Plant Cell">
        <title>Hexokinase as a sugar sensor in higher plants.</title>
        <authorList>
            <person name="Jang J.-C."/>
            <person name="Leon P."/>
            <person name="Zhou L."/>
            <person name="Sheen J."/>
        </authorList>
    </citation>
    <scope>NUCLEOTIDE SEQUENCE [MRNA]</scope>
    <scope>FUNCTION</scope>
    <scope>TISSUE SPECIFICITY</scope>
    <source>
        <strain>cv. Landsberg erecta</strain>
    </source>
</reference>
<reference key="3">
    <citation type="journal article" date="1999" name="Nature">
        <title>Sequence and analysis of chromosome 4 of the plant Arabidopsis thaliana.</title>
        <authorList>
            <person name="Mayer K.F.X."/>
            <person name="Schueller C."/>
            <person name="Wambutt R."/>
            <person name="Murphy G."/>
            <person name="Volckaert G."/>
            <person name="Pohl T."/>
            <person name="Duesterhoeft A."/>
            <person name="Stiekema W."/>
            <person name="Entian K.-D."/>
            <person name="Terryn N."/>
            <person name="Harris B."/>
            <person name="Ansorge W."/>
            <person name="Brandt P."/>
            <person name="Grivell L.A."/>
            <person name="Rieger M."/>
            <person name="Weichselgartner M."/>
            <person name="de Simone V."/>
            <person name="Obermaier B."/>
            <person name="Mache R."/>
            <person name="Mueller M."/>
            <person name="Kreis M."/>
            <person name="Delseny M."/>
            <person name="Puigdomenech P."/>
            <person name="Watson M."/>
            <person name="Schmidtheini T."/>
            <person name="Reichert B."/>
            <person name="Portetelle D."/>
            <person name="Perez-Alonso M."/>
            <person name="Boutry M."/>
            <person name="Bancroft I."/>
            <person name="Vos P."/>
            <person name="Hoheisel J."/>
            <person name="Zimmermann W."/>
            <person name="Wedler H."/>
            <person name="Ridley P."/>
            <person name="Langham S.-A."/>
            <person name="McCullagh B."/>
            <person name="Bilham L."/>
            <person name="Robben J."/>
            <person name="van der Schueren J."/>
            <person name="Grymonprez B."/>
            <person name="Chuang Y.-J."/>
            <person name="Vandenbussche F."/>
            <person name="Braeken M."/>
            <person name="Weltjens I."/>
            <person name="Voet M."/>
            <person name="Bastiaens I."/>
            <person name="Aert R."/>
            <person name="Defoor E."/>
            <person name="Weitzenegger T."/>
            <person name="Bothe G."/>
            <person name="Ramsperger U."/>
            <person name="Hilbert H."/>
            <person name="Braun M."/>
            <person name="Holzer E."/>
            <person name="Brandt A."/>
            <person name="Peters S."/>
            <person name="van Staveren M."/>
            <person name="Dirkse W."/>
            <person name="Mooijman P."/>
            <person name="Klein Lankhorst R."/>
            <person name="Rose M."/>
            <person name="Hauf J."/>
            <person name="Koetter P."/>
            <person name="Berneiser S."/>
            <person name="Hempel S."/>
            <person name="Feldpausch M."/>
            <person name="Lamberth S."/>
            <person name="Van den Daele H."/>
            <person name="De Keyser A."/>
            <person name="Buysshaert C."/>
            <person name="Gielen J."/>
            <person name="Villarroel R."/>
            <person name="De Clercq R."/>
            <person name="van Montagu M."/>
            <person name="Rogers J."/>
            <person name="Cronin A."/>
            <person name="Quail M.A."/>
            <person name="Bray-Allen S."/>
            <person name="Clark L."/>
            <person name="Doggett J."/>
            <person name="Hall S."/>
            <person name="Kay M."/>
            <person name="Lennard N."/>
            <person name="McLay K."/>
            <person name="Mayes R."/>
            <person name="Pettett A."/>
            <person name="Rajandream M.A."/>
            <person name="Lyne M."/>
            <person name="Benes V."/>
            <person name="Rechmann S."/>
            <person name="Borkova D."/>
            <person name="Bloecker H."/>
            <person name="Scharfe M."/>
            <person name="Grimm M."/>
            <person name="Loehnert T.-H."/>
            <person name="Dose S."/>
            <person name="de Haan M."/>
            <person name="Maarse A.C."/>
            <person name="Schaefer M."/>
            <person name="Mueller-Auer S."/>
            <person name="Gabel C."/>
            <person name="Fuchs M."/>
            <person name="Fartmann B."/>
            <person name="Granderath K."/>
            <person name="Dauner D."/>
            <person name="Herzl A."/>
            <person name="Neumann S."/>
            <person name="Argiriou A."/>
            <person name="Vitale D."/>
            <person name="Liguori R."/>
            <person name="Piravandi E."/>
            <person name="Massenet O."/>
            <person name="Quigley F."/>
            <person name="Clabauld G."/>
            <person name="Muendlein A."/>
            <person name="Felber R."/>
            <person name="Schnabl S."/>
            <person name="Hiller R."/>
            <person name="Schmidt W."/>
            <person name="Lecharny A."/>
            <person name="Aubourg S."/>
            <person name="Chefdor F."/>
            <person name="Cooke R."/>
            <person name="Berger C."/>
            <person name="Monfort A."/>
            <person name="Casacuberta E."/>
            <person name="Gibbons T."/>
            <person name="Weber N."/>
            <person name="Vandenbol M."/>
            <person name="Bargues M."/>
            <person name="Terol J."/>
            <person name="Torres A."/>
            <person name="Perez-Perez A."/>
            <person name="Purnelle B."/>
            <person name="Bent E."/>
            <person name="Johnson S."/>
            <person name="Tacon D."/>
            <person name="Jesse T."/>
            <person name="Heijnen L."/>
            <person name="Schwarz S."/>
            <person name="Scholler P."/>
            <person name="Heber S."/>
            <person name="Francs P."/>
            <person name="Bielke C."/>
            <person name="Frishman D."/>
            <person name="Haase D."/>
            <person name="Lemcke K."/>
            <person name="Mewes H.-W."/>
            <person name="Stocker S."/>
            <person name="Zaccaria P."/>
            <person name="Bevan M."/>
            <person name="Wilson R.K."/>
            <person name="de la Bastide M."/>
            <person name="Habermann K."/>
            <person name="Parnell L."/>
            <person name="Dedhia N."/>
            <person name="Gnoj L."/>
            <person name="Schutz K."/>
            <person name="Huang E."/>
            <person name="Spiegel L."/>
            <person name="Sekhon M."/>
            <person name="Murray J."/>
            <person name="Sheet P."/>
            <person name="Cordes M."/>
            <person name="Abu-Threideh J."/>
            <person name="Stoneking T."/>
            <person name="Kalicki J."/>
            <person name="Graves T."/>
            <person name="Harmon G."/>
            <person name="Edwards J."/>
            <person name="Latreille P."/>
            <person name="Courtney L."/>
            <person name="Cloud J."/>
            <person name="Abbott A."/>
            <person name="Scott K."/>
            <person name="Johnson D."/>
            <person name="Minx P."/>
            <person name="Bentley D."/>
            <person name="Fulton B."/>
            <person name="Miller N."/>
            <person name="Greco T."/>
            <person name="Kemp K."/>
            <person name="Kramer J."/>
            <person name="Fulton L."/>
            <person name="Mardis E."/>
            <person name="Dante M."/>
            <person name="Pepin K."/>
            <person name="Hillier L.W."/>
            <person name="Nelson J."/>
            <person name="Spieth J."/>
            <person name="Ryan E."/>
            <person name="Andrews S."/>
            <person name="Geisel C."/>
            <person name="Layman D."/>
            <person name="Du H."/>
            <person name="Ali J."/>
            <person name="Berghoff A."/>
            <person name="Jones K."/>
            <person name="Drone K."/>
            <person name="Cotton M."/>
            <person name="Joshu C."/>
            <person name="Antonoiu B."/>
            <person name="Zidanic M."/>
            <person name="Strong C."/>
            <person name="Sun H."/>
            <person name="Lamar B."/>
            <person name="Yordan C."/>
            <person name="Ma P."/>
            <person name="Zhong J."/>
            <person name="Preston R."/>
            <person name="Vil D."/>
            <person name="Shekher M."/>
            <person name="Matero A."/>
            <person name="Shah R."/>
            <person name="Swaby I.K."/>
            <person name="O'Shaughnessy A."/>
            <person name="Rodriguez M."/>
            <person name="Hoffman J."/>
            <person name="Till S."/>
            <person name="Granat S."/>
            <person name="Shohdy N."/>
            <person name="Hasegawa A."/>
            <person name="Hameed A."/>
            <person name="Lodhi M."/>
            <person name="Johnson A."/>
            <person name="Chen E."/>
            <person name="Marra M.A."/>
            <person name="Martienssen R."/>
            <person name="McCombie W.R."/>
        </authorList>
    </citation>
    <scope>NUCLEOTIDE SEQUENCE [LARGE SCALE GENOMIC DNA]</scope>
    <source>
        <strain>cv. Columbia</strain>
    </source>
</reference>
<reference key="4">
    <citation type="journal article" date="2017" name="Plant J.">
        <title>Araport11: a complete reannotation of the Arabidopsis thaliana reference genome.</title>
        <authorList>
            <person name="Cheng C.Y."/>
            <person name="Krishnakumar V."/>
            <person name="Chan A.P."/>
            <person name="Thibaud-Nissen F."/>
            <person name="Schobel S."/>
            <person name="Town C.D."/>
        </authorList>
    </citation>
    <scope>GENOME REANNOTATION</scope>
    <source>
        <strain>cv. Columbia</strain>
    </source>
</reference>
<reference key="5">
    <citation type="journal article" date="2003" name="Science">
        <title>Empirical analysis of transcriptional activity in the Arabidopsis genome.</title>
        <authorList>
            <person name="Yamada K."/>
            <person name="Lim J."/>
            <person name="Dale J.M."/>
            <person name="Chen H."/>
            <person name="Shinn P."/>
            <person name="Palm C.J."/>
            <person name="Southwick A.M."/>
            <person name="Wu H.C."/>
            <person name="Kim C.J."/>
            <person name="Nguyen M."/>
            <person name="Pham P.K."/>
            <person name="Cheuk R.F."/>
            <person name="Karlin-Newmann G."/>
            <person name="Liu S.X."/>
            <person name="Lam B."/>
            <person name="Sakano H."/>
            <person name="Wu T."/>
            <person name="Yu G."/>
            <person name="Miranda M."/>
            <person name="Quach H.L."/>
            <person name="Tripp M."/>
            <person name="Chang C.H."/>
            <person name="Lee J.M."/>
            <person name="Toriumi M.J."/>
            <person name="Chan M.M."/>
            <person name="Tang C.C."/>
            <person name="Onodera C.S."/>
            <person name="Deng J.M."/>
            <person name="Akiyama K."/>
            <person name="Ansari Y."/>
            <person name="Arakawa T."/>
            <person name="Banh J."/>
            <person name="Banno F."/>
            <person name="Bowser L."/>
            <person name="Brooks S.Y."/>
            <person name="Carninci P."/>
            <person name="Chao Q."/>
            <person name="Choy N."/>
            <person name="Enju A."/>
            <person name="Goldsmith A.D."/>
            <person name="Gurjal M."/>
            <person name="Hansen N.F."/>
            <person name="Hayashizaki Y."/>
            <person name="Johnson-Hopson C."/>
            <person name="Hsuan V.W."/>
            <person name="Iida K."/>
            <person name="Karnes M."/>
            <person name="Khan S."/>
            <person name="Koesema E."/>
            <person name="Ishida J."/>
            <person name="Jiang P.X."/>
            <person name="Jones T."/>
            <person name="Kawai J."/>
            <person name="Kamiya A."/>
            <person name="Meyers C."/>
            <person name="Nakajima M."/>
            <person name="Narusaka M."/>
            <person name="Seki M."/>
            <person name="Sakurai T."/>
            <person name="Satou M."/>
            <person name="Tamse R."/>
            <person name="Vaysberg M."/>
            <person name="Wallender E.K."/>
            <person name="Wong C."/>
            <person name="Yamamura Y."/>
            <person name="Yuan S."/>
            <person name="Shinozaki K."/>
            <person name="Davis R.W."/>
            <person name="Theologis A."/>
            <person name="Ecker J.R."/>
        </authorList>
    </citation>
    <scope>NUCLEOTIDE SEQUENCE [LARGE SCALE MRNA]</scope>
    <source>
        <strain>cv. Columbia</strain>
    </source>
</reference>
<reference key="6">
    <citation type="journal article" date="2003" name="Science">
        <title>Role of the Arabidopsis glucose sensor HXK1 in nutrient, light, and hormonal signaling.</title>
        <authorList>
            <person name="Moore B."/>
            <person name="Zhou L."/>
            <person name="Rolland F."/>
            <person name="Hall Q."/>
            <person name="Cheng W.-H."/>
            <person name="Liu Y.-X."/>
            <person name="Hwang I."/>
            <person name="Jones T."/>
            <person name="Sheen J."/>
        </authorList>
    </citation>
    <scope>FUNCTION</scope>
    <scope>MUTAGENESIS OF GLY-104; SER-177 AND GLY-416</scope>
    <scope>DISRUPTION PHENOTYPE</scope>
    <source>
        <strain>cv. Landsberg erecta</strain>
    </source>
</reference>
<reference key="7">
    <citation type="journal article" date="2004" name="Plant Cell">
        <title>Experimental analysis of the Arabidopsis mitochondrial proteome highlights signaling and regulatory components, provides assessment of targeting prediction programs, and indicates plant-specific mitochondrial proteins.</title>
        <authorList>
            <person name="Heazlewood J.L."/>
            <person name="Tonti-Filippini J.S."/>
            <person name="Gout A.M."/>
            <person name="Day D.A."/>
            <person name="Whelan J."/>
            <person name="Millar A.H."/>
        </authorList>
    </citation>
    <scope>IDENTIFICATION BY MASS SPECTROMETRY</scope>
    <scope>SUBCELLULAR LOCATION [LARGE SCALE ANALYSIS]</scope>
    <source>
        <strain>cv. Landsberg erecta</strain>
    </source>
</reference>
<reference key="8">
    <citation type="journal article" date="2006" name="Cell">
        <title>Regulatory functions of nuclear hexokinase1 complex in glucose signaling.</title>
        <authorList>
            <person name="Cho Y.H."/>
            <person name="Yoo S.D."/>
            <person name="Sheen J."/>
        </authorList>
    </citation>
    <scope>INTERACTION WITH RPT5B</scope>
    <scope>SUBCELLULAR LOCATION</scope>
</reference>
<reference key="9">
    <citation type="journal article" date="2006" name="Plant Cell">
        <title>Mitochondria-associated hexokinases play a role in the control of programmed cell death in Nicotiana benthamiana.</title>
        <authorList>
            <person name="Kim M."/>
            <person name="Lim J.-H."/>
            <person name="Ahn C.S."/>
            <person name="Park K."/>
            <person name="Kim G.T."/>
            <person name="Kim W.T."/>
            <person name="Pai H.-S."/>
        </authorList>
    </citation>
    <scope>FUNCTION</scope>
    <scope>SUBCELLULAR LOCATION</scope>
</reference>
<reference key="10">
    <citation type="journal article" date="2015" name="Front. Plant Sci.">
        <title>Cooperative control between AtRGS1 and AtHXK1 in a WD40-repeat protein pathway in Arabidopsis thaliana.</title>
        <authorList>
            <person name="Huang J.-P."/>
            <person name="Tunc-Ozdemir M."/>
            <person name="Chang Y."/>
            <person name="Jones A.M."/>
        </authorList>
    </citation>
    <scope>FUNCTION</scope>
    <scope>DISRUPTION PHENOTYPE</scope>
    <scope>INTERACTION WITH RHIP1</scope>
</reference>
<reference key="11">
    <citation type="journal article" date="2017" name="Plant J.">
        <title>Sugar and hexokinase suppress expression of PIP aquaporins and reduce leaf hydraulics that preserves leaf water potential.</title>
        <authorList>
            <person name="Kelly G."/>
            <person name="Sade N."/>
            <person name="Doron-Faigenboim A."/>
            <person name="Lerner S."/>
            <person name="Shatil-Cohen A."/>
            <person name="Yeselson Y."/>
            <person name="Egbaria A."/>
            <person name="Kottapalli J."/>
            <person name="Schaffer A.A."/>
            <person name="Moshelion M."/>
            <person name="Granot D."/>
        </authorList>
    </citation>
    <scope>FUNCTION</scope>
</reference>
<reference key="12">
    <citation type="journal article" date="2019" name="Plant Mol. Biol.">
        <title>The role of HEXOKINASE1 in Arabidopsis leaf growth.</title>
        <authorList>
            <person name="Van Dingenen J."/>
            <person name="Vermeersch M."/>
            <person name="De Milde L."/>
            <person name="Hulsmans S."/>
            <person name="De Winne N."/>
            <person name="Van Leene J."/>
            <person name="Gonzalez N."/>
            <person name="Dhondt S."/>
            <person name="De Jaeger G."/>
            <person name="Rolland F."/>
            <person name="Inze D."/>
        </authorList>
    </citation>
    <scope>FUNCTION</scope>
    <scope>INTERACTION WITH KING1</scope>
    <scope>DISRUPTION PHENOTYPE</scope>
</reference>
<reference key="13">
    <citation type="journal article" date="2021" name="Commun. Biol.">
        <title>Guard cells control hypocotyl elongation through HXK1, HY5, and PIF4.</title>
        <authorList>
            <person name="Kelly G."/>
            <person name="Brandsma D."/>
            <person name="Egbaria A."/>
            <person name="Stein O."/>
            <person name="Doron-Faigenboim A."/>
            <person name="Lugassi N."/>
            <person name="Belausov E."/>
            <person name="Zemach H."/>
            <person name="Shaya F."/>
            <person name="Carmi N."/>
            <person name="Sade N."/>
            <person name="Granot D."/>
        </authorList>
    </citation>
    <scope>FUNCTION</scope>
</reference>
<reference key="14">
    <citation type="journal article" date="2022" name="J. Integr. Plant Biol.">
        <title>HEXOKINASE1 forms a nuclear complex with the PRC2 subunits CURLY LEAF and SWINGER to regulate glucose signaling.</title>
        <authorList>
            <person name="Liu Y."/>
            <person name="Bai Y."/>
            <person name="Li N."/>
            <person name="Li M."/>
            <person name="Liu W."/>
            <person name="Yun D.J."/>
            <person name="Liu B."/>
            <person name="Xu Z.Y."/>
        </authorList>
    </citation>
    <scope>FUNCTION</scope>
    <scope>INTERACTION WITH EZA1/SWN AND CLF</scope>
    <scope>SUBCELLULAR LOCATION</scope>
</reference>
<reference key="15">
    <citation type="journal article" date="2015" name="Acta Crystallogr. D">
        <title>Biochemical and structural study of Arabidopsis hexokinase 1.</title>
        <authorList>
            <person name="Feng J."/>
            <person name="Zhao S."/>
            <person name="Chen X."/>
            <person name="Wang W."/>
            <person name="Dong W."/>
            <person name="Chen J."/>
            <person name="Shen J.R."/>
            <person name="Liu L."/>
            <person name="Kuang T."/>
        </authorList>
    </citation>
    <scope>X-RAY CRYSTALLOGRAPHY (1.80 ANGSTROMS) OF 30-496 IN COMPLEX WITH D-GLUCOSE</scope>
</reference>
<keyword id="KW-0002">3D-structure</keyword>
<keyword id="KW-0067">ATP-binding</keyword>
<keyword id="KW-0324">Glycolysis</keyword>
<keyword id="KW-0418">Kinase</keyword>
<keyword id="KW-0472">Membrane</keyword>
<keyword id="KW-0496">Mitochondrion</keyword>
<keyword id="KW-1000">Mitochondrion outer membrane</keyword>
<keyword id="KW-0547">Nucleotide-binding</keyword>
<keyword id="KW-0539">Nucleus</keyword>
<keyword id="KW-1185">Reference proteome</keyword>
<keyword id="KW-0808">Transferase</keyword>
<keyword id="KW-0812">Transmembrane</keyword>
<keyword id="KW-1133">Transmembrane helix</keyword>
<protein>
    <recommendedName>
        <fullName evidence="16">Hexokinase-1</fullName>
        <ecNumber evidence="3 13">2.7.1.1</ecNumber>
    </recommendedName>
    <alternativeName>
        <fullName evidence="15">Protein GLUCOSE INSENSITIVE 2</fullName>
    </alternativeName>
</protein>
<proteinExistence type="evidence at protein level"/>
<feature type="chain" id="PRO_0000197612" description="Hexokinase-1">
    <location>
        <begin position="1"/>
        <end position="496"/>
    </location>
</feature>
<feature type="transmembrane region" description="Helical" evidence="2">
    <location>
        <begin position="4"/>
        <end position="24"/>
    </location>
</feature>
<feature type="domain" description="Hexokinase" evidence="3">
    <location>
        <begin position="35"/>
        <end position="487"/>
    </location>
</feature>
<feature type="region of interest" description="Hexokinase small subdomain" evidence="3">
    <location>
        <begin position="90"/>
        <end position="228"/>
    </location>
</feature>
<feature type="region of interest" description="Hexokinase large subdomain" evidence="3">
    <location>
        <begin position="229"/>
        <end position="476"/>
    </location>
</feature>
<feature type="binding site" evidence="1">
    <location>
        <position position="104"/>
    </location>
    <ligand>
        <name>ADP</name>
        <dbReference type="ChEBI" id="CHEBI:456216"/>
    </ligand>
</feature>
<feature type="binding site" evidence="1">
    <location>
        <position position="105"/>
    </location>
    <ligand>
        <name>ADP</name>
        <dbReference type="ChEBI" id="CHEBI:456216"/>
    </ligand>
</feature>
<feature type="binding site" evidence="1">
    <location>
        <position position="106"/>
    </location>
    <ligand>
        <name>ADP</name>
        <dbReference type="ChEBI" id="CHEBI:456216"/>
    </ligand>
</feature>
<feature type="binding site" evidence="7 21 22">
    <location>
        <position position="194"/>
    </location>
    <ligand>
        <name>D-glucose</name>
        <dbReference type="ChEBI" id="CHEBI:4167"/>
    </ligand>
</feature>
<feature type="binding site" evidence="7 21 22">
    <location>
        <position position="195"/>
    </location>
    <ligand>
        <name>D-glucose</name>
        <dbReference type="ChEBI" id="CHEBI:4167"/>
    </ligand>
</feature>
<feature type="binding site" evidence="7 21 22">
    <location>
        <position position="229"/>
    </location>
    <ligand>
        <name>D-glucose</name>
        <dbReference type="ChEBI" id="CHEBI:4167"/>
    </ligand>
</feature>
<feature type="binding site" evidence="7 21 22">
    <location>
        <position position="230"/>
    </location>
    <ligand>
        <name>D-glucose</name>
        <dbReference type="ChEBI" id="CHEBI:4167"/>
    </ligand>
</feature>
<feature type="binding site" evidence="1">
    <location>
        <position position="253"/>
    </location>
    <ligand>
        <name>ADP</name>
        <dbReference type="ChEBI" id="CHEBI:456216"/>
    </ligand>
</feature>
<feature type="binding site" evidence="7 21 22">
    <location>
        <position position="256"/>
    </location>
    <ligand>
        <name>D-glucose</name>
        <dbReference type="ChEBI" id="CHEBI:4167"/>
    </ligand>
</feature>
<feature type="binding site" evidence="7 21 22">
    <location>
        <position position="284"/>
    </location>
    <ligand>
        <name>D-glucose</name>
        <dbReference type="ChEBI" id="CHEBI:4167"/>
    </ligand>
</feature>
<feature type="binding site" evidence="7 21 22">
    <location>
        <position position="315"/>
    </location>
    <ligand>
        <name>D-glucose</name>
        <dbReference type="ChEBI" id="CHEBI:4167"/>
    </ligand>
</feature>
<feature type="binding site" evidence="1">
    <location>
        <position position="441"/>
    </location>
    <ligand>
        <name>ADP</name>
        <dbReference type="ChEBI" id="CHEBI:456216"/>
    </ligand>
</feature>
<feature type="mutagenesis site" description="Abolishes glucose phosphorylation activity." evidence="4">
    <original>G</original>
    <variation>A</variation>
    <location>
        <position position="104"/>
    </location>
</feature>
<feature type="mutagenesis site" description="Abolishes glucose phosphorylation activity." evidence="4">
    <original>S</original>
    <variation>D</variation>
    <location>
        <position position="177"/>
    </location>
</feature>
<feature type="mutagenesis site" description="In gin2-2; insensitive to glucose." evidence="4">
    <original>G</original>
    <variation>A</variation>
    <location>
        <position position="416"/>
    </location>
</feature>
<feature type="helix" evidence="24">
    <location>
        <begin position="34"/>
        <end position="48"/>
    </location>
</feature>
<feature type="helix" evidence="24">
    <location>
        <begin position="52"/>
        <end position="71"/>
    </location>
</feature>
<feature type="strand" evidence="24">
    <location>
        <begin position="75"/>
        <end position="78"/>
    </location>
</feature>
<feature type="strand" evidence="24">
    <location>
        <begin position="94"/>
        <end position="115"/>
    </location>
</feature>
<feature type="turn" evidence="24">
    <location>
        <begin position="117"/>
        <end position="119"/>
    </location>
</feature>
<feature type="strand" evidence="24">
    <location>
        <begin position="121"/>
        <end position="130"/>
    </location>
</feature>
<feature type="turn" evidence="24">
    <location>
        <begin position="133"/>
        <end position="136"/>
    </location>
</feature>
<feature type="helix" evidence="24">
    <location>
        <begin position="140"/>
        <end position="155"/>
    </location>
</feature>
<feature type="helix" evidence="23">
    <location>
        <begin position="160"/>
        <end position="162"/>
    </location>
</feature>
<feature type="strand" evidence="24">
    <location>
        <begin position="170"/>
        <end position="176"/>
    </location>
</feature>
<feature type="strand" evidence="24">
    <location>
        <begin position="178"/>
        <end position="184"/>
    </location>
</feature>
<feature type="strand" evidence="24">
    <location>
        <begin position="187"/>
        <end position="190"/>
    </location>
</feature>
<feature type="helix" evidence="24">
    <location>
        <begin position="200"/>
        <end position="202"/>
    </location>
</feature>
<feature type="helix" evidence="24">
    <location>
        <begin position="207"/>
        <end position="216"/>
    </location>
</feature>
<feature type="turn" evidence="24">
    <location>
        <begin position="217"/>
        <end position="219"/>
    </location>
</feature>
<feature type="strand" evidence="24">
    <location>
        <begin position="222"/>
        <end position="228"/>
    </location>
</feature>
<feature type="helix" evidence="24">
    <location>
        <begin position="230"/>
        <end position="241"/>
    </location>
</feature>
<feature type="strand" evidence="24">
    <location>
        <begin position="245"/>
        <end position="262"/>
    </location>
</feature>
<feature type="helix" evidence="24">
    <location>
        <begin position="263"/>
        <end position="265"/>
    </location>
</feature>
<feature type="strand" evidence="24">
    <location>
        <begin position="277"/>
        <end position="282"/>
    </location>
</feature>
<feature type="helix" evidence="24">
    <location>
        <begin position="285"/>
        <end position="287"/>
    </location>
</feature>
<feature type="helix" evidence="24">
    <location>
        <begin position="297"/>
        <end position="304"/>
    </location>
</feature>
<feature type="strand" evidence="24">
    <location>
        <begin position="306"/>
        <end position="308"/>
    </location>
</feature>
<feature type="helix" evidence="24">
    <location>
        <begin position="315"/>
        <end position="318"/>
    </location>
</feature>
<feature type="helix" evidence="24">
    <location>
        <begin position="320"/>
        <end position="338"/>
    </location>
</feature>
<feature type="strand" evidence="24">
    <location>
        <begin position="342"/>
        <end position="344"/>
    </location>
</feature>
<feature type="helix" evidence="24">
    <location>
        <begin position="347"/>
        <end position="350"/>
    </location>
</feature>
<feature type="helix" evidence="24">
    <location>
        <begin position="357"/>
        <end position="364"/>
    </location>
</feature>
<feature type="helix" evidence="25">
    <location>
        <begin position="369"/>
        <end position="371"/>
    </location>
</feature>
<feature type="helix" evidence="24">
    <location>
        <begin position="372"/>
        <end position="382"/>
    </location>
</feature>
<feature type="helix" evidence="24">
    <location>
        <begin position="389"/>
        <end position="420"/>
    </location>
</feature>
<feature type="strand" evidence="24">
    <location>
        <begin position="434"/>
        <end position="440"/>
    </location>
</feature>
<feature type="helix" evidence="24">
    <location>
        <begin position="441"/>
        <end position="444"/>
    </location>
</feature>
<feature type="helix" evidence="24">
    <location>
        <begin position="447"/>
        <end position="466"/>
    </location>
</feature>
<feature type="strand" evidence="24">
    <location>
        <begin position="469"/>
        <end position="473"/>
    </location>
</feature>
<feature type="turn" evidence="24">
    <location>
        <begin position="477"/>
        <end position="479"/>
    </location>
</feature>
<feature type="helix" evidence="24">
    <location>
        <begin position="480"/>
        <end position="488"/>
    </location>
</feature>
<name>HXK1_ARATH</name>
<comment type="function">
    <text evidence="4 5 8 9 10 11 12 13 14">Fructose and glucose phosphorylating enzyme (PubMed:7610198). May be involved in the phosphorylation of glucose during the export from mitochondrion to cytosol (PubMed:16920781). Acts as a sugar sensor which may regulate sugar-dependent gene repression or activation (PubMed:12690200, PubMed:26528314, PubMed:9014361). Mediates the effects of sugar on plant growth and development independently of its catalytic activity or the sugar metabolism (PubMed:12690200, PubMed:9014361). May regulate the execution of program cell death in plant cells (PubMed:16920781). Promotes roots and leaves growth (PubMed:26528314). Together with sugar, is involved in the regulation of the expression of aquaporin genes, and reduces leaf water conductance, to coordinate sugar levels with the loss of water through transpiration (PubMed:28390076). Regulates cell proliferation and expansion early during leaf development (PubMed:30511331). Involved in sucrose-induced leaf growth stimulation independently of GPT2 (PubMed:30511331). May participate to the stimulation of hypocotyl elongation under long-day (LD) conditions (PubMed:34155329). Forms a nuclear complex with CLF and EZA1/SWN to target common glucose-responsive genes and regulate glucose signaling (PubMed:35394700). Is required for CLF- and EZA1/SWN-mediated histone H3 trimethylation on 'Lys-27' (H3K27me3) and glucose-mediated gene repression (PubMed:35394700).</text>
</comment>
<comment type="catalytic activity">
    <reaction evidence="3 13">
        <text>a D-hexose + ATP = a D-hexose 6-phosphate + ADP + H(+)</text>
        <dbReference type="Rhea" id="RHEA:22740"/>
        <dbReference type="ChEBI" id="CHEBI:4194"/>
        <dbReference type="ChEBI" id="CHEBI:15378"/>
        <dbReference type="ChEBI" id="CHEBI:30616"/>
        <dbReference type="ChEBI" id="CHEBI:229467"/>
        <dbReference type="ChEBI" id="CHEBI:456216"/>
        <dbReference type="EC" id="2.7.1.1"/>
    </reaction>
    <physiologicalReaction direction="left-to-right" evidence="13">
        <dbReference type="Rhea" id="RHEA:22741"/>
    </physiologicalReaction>
</comment>
<comment type="catalytic activity">
    <reaction evidence="13">
        <text>D-fructose + ATP = D-fructose 6-phosphate + ADP + H(+)</text>
        <dbReference type="Rhea" id="RHEA:16125"/>
        <dbReference type="ChEBI" id="CHEBI:15378"/>
        <dbReference type="ChEBI" id="CHEBI:30616"/>
        <dbReference type="ChEBI" id="CHEBI:37721"/>
        <dbReference type="ChEBI" id="CHEBI:61527"/>
        <dbReference type="ChEBI" id="CHEBI:456216"/>
        <dbReference type="EC" id="2.7.1.1"/>
    </reaction>
    <physiologicalReaction direction="left-to-right" evidence="13">
        <dbReference type="Rhea" id="RHEA:16126"/>
    </physiologicalReaction>
</comment>
<comment type="catalytic activity">
    <reaction evidence="13">
        <text>D-glucose + ATP = D-glucose 6-phosphate + ADP + H(+)</text>
        <dbReference type="Rhea" id="RHEA:17825"/>
        <dbReference type="ChEBI" id="CHEBI:4167"/>
        <dbReference type="ChEBI" id="CHEBI:15378"/>
        <dbReference type="ChEBI" id="CHEBI:30616"/>
        <dbReference type="ChEBI" id="CHEBI:61548"/>
        <dbReference type="ChEBI" id="CHEBI:456216"/>
        <dbReference type="EC" id="2.7.1.1"/>
    </reaction>
    <physiologicalReaction direction="left-to-right" evidence="13">
        <dbReference type="Rhea" id="RHEA:17826"/>
    </physiologicalReaction>
</comment>
<comment type="biophysicochemical properties">
    <kinetics>
        <KM evidence="13">44 uM for glucose</KM>
        <KM evidence="13">17 mM for fructose</KM>
        <text evidence="13">Measured in yeast lacking glucose and hexose kinase activity.</text>
    </kinetics>
</comment>
<comment type="pathway">
    <text evidence="18">Carbohydrate metabolism; hexose metabolism.</text>
</comment>
<comment type="pathway">
    <text evidence="18">Carbohydrate degradation; glycolysis; D-glyceraldehyde 3-phosphate and glycerone phosphate from D-glucose: step 1/4.</text>
</comment>
<comment type="subunit">
    <text evidence="6 8 10 12">Interacts with RPT5B in nucleus. Interacts with RHIP1 (PubMed:26528314). Interacts with KING1 in mitochondria (PubMed:30511331). Interacts with CLF (via SANT domain) and EZA1/SWN (via SANT domain) in nucleus (PubMed:35394700).</text>
</comment>
<comment type="interaction">
    <interactant intactId="EBI-1644489">
        <id>Q42525</id>
    </interactant>
    <interactant intactId="EBI-1644538">
        <id>Q96292</id>
        <label>ACT2</label>
    </interactant>
    <organismsDiffer>false</organismsDiffer>
    <experiments>2</experiments>
</comment>
<comment type="interaction">
    <interactant intactId="EBI-1644489">
        <id>Q42525</id>
    </interactant>
    <interactant intactId="EBI-1644501">
        <id>Q9SRH5</id>
        <label>VDAC1</label>
    </interactant>
    <organismsDiffer>false</organismsDiffer>
    <experiments>2</experiments>
</comment>
<comment type="subcellular location">
    <subcellularLocation>
        <location>Mitochondrion outer membrane</location>
        <topology>Single-pass membrane protein</topology>
    </subcellularLocation>
    <subcellularLocation>
        <location evidence="12">Nucleus</location>
    </subcellularLocation>
</comment>
<comment type="tissue specificity">
    <text evidence="14">Highly expressed in flowers and siliques, at intermediate levels in roots and stems, and at lower levels in rosette and cauline leaves.</text>
</comment>
<comment type="disruption phenotype">
    <text evidence="4 8 10">Plants display a glucose-insensitive phenotype which allows them to grow on high glucose concentration medium (&gt;6% glucose) (PubMed:12690200, PubMed:26528314, PubMed:30511331). Dwarf plants with reduced roots and leaves growth (PubMed:26528314, PubMed:30511331).</text>
</comment>
<comment type="similarity">
    <text evidence="3 17">Belongs to the hexokinase family.</text>
</comment>
<comment type="sequence caution" evidence="17">
    <conflict type="erroneous initiation">
        <sequence resource="EMBL-CDS" id="AAA60333"/>
    </conflict>
    <text>Truncated N-terminus.</text>
</comment>
<organism>
    <name type="scientific">Arabidopsis thaliana</name>
    <name type="common">Mouse-ear cress</name>
    <dbReference type="NCBI Taxonomy" id="3702"/>
    <lineage>
        <taxon>Eukaryota</taxon>
        <taxon>Viridiplantae</taxon>
        <taxon>Streptophyta</taxon>
        <taxon>Embryophyta</taxon>
        <taxon>Tracheophyta</taxon>
        <taxon>Spermatophyta</taxon>
        <taxon>Magnoliopsida</taxon>
        <taxon>eudicotyledons</taxon>
        <taxon>Gunneridae</taxon>
        <taxon>Pentapetalae</taxon>
        <taxon>rosids</taxon>
        <taxon>malvids</taxon>
        <taxon>Brassicales</taxon>
        <taxon>Brassicaceae</taxon>
        <taxon>Camelineae</taxon>
        <taxon>Arabidopsis</taxon>
    </lineage>
</organism>
<sequence length="496" mass="53707">MGKVAVGATVVCTAAVCAVAVLVVRRRMQSSGKWGRVLAILKAFEEDCATPISKLRQVADAMTVEMHAGLASDGGSKLKMLISYVDNLPSGDEKGLFYALDLGGTNFRVMRVLLGGKQERVVKQEFEEVSIPPHLMTGGSDELFNFIAEALAKFVATECEDFHLPEGRQRELGFTFSFPVKQTSLSSGSLIKWTKGFSIEEAVGQDVVGALNKALERVGLDMRIAALVNDTVGTLAGGRYYNPDVVAAVILGTGTNAAYVERATAIPKWHGLLPKSGEMVINMEWGNFRSSHLPLTEFDHTLDFESLNPGEQILEKIISGMYLGEILRRVLLKMAEDAAFFGDTVPSKLRIPFIIRTPHMSAMHNDTSPDLKIVGSKIKDILEVPTTSLKMRKVVISLCNIIATRGARLSAAGIYGILKKLGRDTTKDEEVQKSVIAMDGGLFEHYTQFSECMESSLKELLGDEASGSVEVTHSNDGSGIGAALLAASHSLYLEDS</sequence>
<dbReference type="EC" id="2.7.1.1" evidence="3 13"/>
<dbReference type="EMBL" id="U18754">
    <property type="protein sequence ID" value="AAA60333.1"/>
    <property type="status" value="ALT_INIT"/>
    <property type="molecule type" value="mRNA"/>
</dbReference>
<dbReference type="EMBL" id="U28214">
    <property type="protein sequence ID" value="AAB49908.1"/>
    <property type="molecule type" value="mRNA"/>
</dbReference>
<dbReference type="EMBL" id="AL078470">
    <property type="protein sequence ID" value="CAB43927.1"/>
    <property type="molecule type" value="Genomic_DNA"/>
</dbReference>
<dbReference type="EMBL" id="AL161574">
    <property type="protein sequence ID" value="CAB79671.1"/>
    <property type="molecule type" value="Genomic_DNA"/>
</dbReference>
<dbReference type="EMBL" id="CP002687">
    <property type="protein sequence ID" value="AEE85590.1"/>
    <property type="molecule type" value="Genomic_DNA"/>
</dbReference>
<dbReference type="EMBL" id="AY075658">
    <property type="protein sequence ID" value="AAL77665.1"/>
    <property type="molecule type" value="mRNA"/>
</dbReference>
<dbReference type="EMBL" id="AY124809">
    <property type="protein sequence ID" value="AAM70518.1"/>
    <property type="molecule type" value="mRNA"/>
</dbReference>
<dbReference type="PIR" id="S71205">
    <property type="entry name" value="S71205"/>
</dbReference>
<dbReference type="RefSeq" id="NP_194642.1">
    <property type="nucleotide sequence ID" value="NM_119057.4"/>
</dbReference>
<dbReference type="PDB" id="4QS7">
    <property type="method" value="X-ray"/>
    <property type="resolution" value="2.00 A"/>
    <property type="chains" value="A=30-496"/>
</dbReference>
<dbReference type="PDB" id="4QS8">
    <property type="method" value="X-ray"/>
    <property type="resolution" value="1.80 A"/>
    <property type="chains" value="A=30-496"/>
</dbReference>
<dbReference type="PDB" id="4QS9">
    <property type="method" value="X-ray"/>
    <property type="resolution" value="2.10 A"/>
    <property type="chains" value="A=30-496"/>
</dbReference>
<dbReference type="PDBsum" id="4QS7"/>
<dbReference type="PDBsum" id="4QS8"/>
<dbReference type="PDBsum" id="4QS9"/>
<dbReference type="SMR" id="Q42525"/>
<dbReference type="BioGRID" id="14321">
    <property type="interactions" value="12"/>
</dbReference>
<dbReference type="FunCoup" id="Q42525">
    <property type="interactions" value="2676"/>
</dbReference>
<dbReference type="IntAct" id="Q42525">
    <property type="interactions" value="5"/>
</dbReference>
<dbReference type="STRING" id="3702.Q42525"/>
<dbReference type="MoonProt" id="Q42525"/>
<dbReference type="iPTMnet" id="Q42525"/>
<dbReference type="SwissPalm" id="Q42525"/>
<dbReference type="PaxDb" id="3702-AT4G29130.1"/>
<dbReference type="ProteomicsDB" id="228861"/>
<dbReference type="EnsemblPlants" id="AT4G29130.1">
    <property type="protein sequence ID" value="AT4G29130.1"/>
    <property type="gene ID" value="AT4G29130"/>
</dbReference>
<dbReference type="GeneID" id="829034"/>
<dbReference type="Gramene" id="AT4G29130.1">
    <property type="protein sequence ID" value="AT4G29130.1"/>
    <property type="gene ID" value="AT4G29130"/>
</dbReference>
<dbReference type="KEGG" id="ath:AT4G29130"/>
<dbReference type="Araport" id="AT4G29130"/>
<dbReference type="TAIR" id="AT4G29130">
    <property type="gene designation" value="HXK1"/>
</dbReference>
<dbReference type="eggNOG" id="KOG1369">
    <property type="taxonomic scope" value="Eukaryota"/>
</dbReference>
<dbReference type="HOGENOM" id="CLU_014393_5_1_1"/>
<dbReference type="InParanoid" id="Q42525"/>
<dbReference type="OMA" id="GYCFSYP"/>
<dbReference type="OrthoDB" id="419537at2759"/>
<dbReference type="PhylomeDB" id="Q42525"/>
<dbReference type="BioCyc" id="ARA:AT4G29130-MONOMER"/>
<dbReference type="BioCyc" id="MetaCyc:AT4G29130-MONOMER"/>
<dbReference type="BRENDA" id="2.7.1.1">
    <property type="organism ID" value="399"/>
</dbReference>
<dbReference type="UniPathway" id="UPA00109">
    <property type="reaction ID" value="UER00180"/>
</dbReference>
<dbReference type="UniPathway" id="UPA00242"/>
<dbReference type="CD-CODE" id="4299E36E">
    <property type="entry name" value="Nucleolus"/>
</dbReference>
<dbReference type="EvolutionaryTrace" id="Q42525"/>
<dbReference type="PRO" id="PR:Q42525"/>
<dbReference type="Proteomes" id="UP000006548">
    <property type="component" value="Chromosome 4"/>
</dbReference>
<dbReference type="ExpressionAtlas" id="Q42525">
    <property type="expression patterns" value="baseline and differential"/>
</dbReference>
<dbReference type="GO" id="GO:0005741">
    <property type="term" value="C:mitochondrial outer membrane"/>
    <property type="evidence" value="ECO:0007669"/>
    <property type="project" value="UniProtKB-SubCell"/>
</dbReference>
<dbReference type="GO" id="GO:0005739">
    <property type="term" value="C:mitochondrion"/>
    <property type="evidence" value="ECO:0000314"/>
    <property type="project" value="TAIR"/>
</dbReference>
<dbReference type="GO" id="GO:0005634">
    <property type="term" value="C:nucleus"/>
    <property type="evidence" value="ECO:0000314"/>
    <property type="project" value="TAIR"/>
</dbReference>
<dbReference type="GO" id="GO:0000325">
    <property type="term" value="C:plant-type vacuole"/>
    <property type="evidence" value="ECO:0007005"/>
    <property type="project" value="TAIR"/>
</dbReference>
<dbReference type="GO" id="GO:0032991">
    <property type="term" value="C:protein-containing complex"/>
    <property type="evidence" value="ECO:0000315"/>
    <property type="project" value="CAFA"/>
</dbReference>
<dbReference type="GO" id="GO:0005524">
    <property type="term" value="F:ATP binding"/>
    <property type="evidence" value="ECO:0007669"/>
    <property type="project" value="UniProtKB-KW"/>
</dbReference>
<dbReference type="GO" id="GO:0001046">
    <property type="term" value="F:core promoter sequence-specific DNA binding"/>
    <property type="evidence" value="ECO:0000315"/>
    <property type="project" value="CAFA"/>
</dbReference>
<dbReference type="GO" id="GO:0005536">
    <property type="term" value="F:D-glucose binding"/>
    <property type="evidence" value="ECO:0007669"/>
    <property type="project" value="InterPro"/>
</dbReference>
<dbReference type="GO" id="GO:0008865">
    <property type="term" value="F:fructokinase activity"/>
    <property type="evidence" value="ECO:0000314"/>
    <property type="project" value="TAIR"/>
</dbReference>
<dbReference type="GO" id="GO:0004340">
    <property type="term" value="F:glucokinase activity"/>
    <property type="evidence" value="ECO:0000314"/>
    <property type="project" value="TAIR"/>
</dbReference>
<dbReference type="GO" id="GO:0004396">
    <property type="term" value="F:hexokinase activity"/>
    <property type="evidence" value="ECO:0000314"/>
    <property type="project" value="TAIR"/>
</dbReference>
<dbReference type="GO" id="GO:0008270">
    <property type="term" value="F:zinc ion binding"/>
    <property type="evidence" value="ECO:0007005"/>
    <property type="project" value="TAIR"/>
</dbReference>
<dbReference type="GO" id="GO:0010255">
    <property type="term" value="P:glucose mediated signaling pathway"/>
    <property type="evidence" value="ECO:0000315"/>
    <property type="project" value="CAFA"/>
</dbReference>
<dbReference type="GO" id="GO:0006096">
    <property type="term" value="P:glycolytic process"/>
    <property type="evidence" value="ECO:0007669"/>
    <property type="project" value="UniProtKB-UniPathway"/>
</dbReference>
<dbReference type="GO" id="GO:0019320">
    <property type="term" value="P:hexose catabolic process"/>
    <property type="evidence" value="ECO:0000314"/>
    <property type="project" value="TAIR"/>
</dbReference>
<dbReference type="GO" id="GO:0012501">
    <property type="term" value="P:programmed cell death"/>
    <property type="evidence" value="ECO:0000315"/>
    <property type="project" value="TAIR"/>
</dbReference>
<dbReference type="GO" id="GO:2000032">
    <property type="term" value="P:regulation of secondary shoot formation"/>
    <property type="evidence" value="ECO:0000315"/>
    <property type="project" value="TAIR"/>
</dbReference>
<dbReference type="GO" id="GO:0006357">
    <property type="term" value="P:regulation of transcription by RNA polymerase II"/>
    <property type="evidence" value="ECO:0000315"/>
    <property type="project" value="CAFA"/>
</dbReference>
<dbReference type="GO" id="GO:0090332">
    <property type="term" value="P:stomatal closure"/>
    <property type="evidence" value="ECO:0000315"/>
    <property type="project" value="TAIR"/>
</dbReference>
<dbReference type="GO" id="GO:0010182">
    <property type="term" value="P:sugar mediated signaling pathway"/>
    <property type="evidence" value="ECO:0000304"/>
    <property type="project" value="TAIR"/>
</dbReference>
<dbReference type="GO" id="GO:0010148">
    <property type="term" value="P:transpiration"/>
    <property type="evidence" value="ECO:0000315"/>
    <property type="project" value="TAIR"/>
</dbReference>
<dbReference type="CDD" id="cd24020">
    <property type="entry name" value="ASKHA_NBD_HK_plant"/>
    <property type="match status" value="1"/>
</dbReference>
<dbReference type="FunFam" id="3.30.420.40:FF:000034">
    <property type="entry name" value="Phosphotransferase"/>
    <property type="match status" value="1"/>
</dbReference>
<dbReference type="FunFam" id="3.40.367.20:FF:000003">
    <property type="entry name" value="Phosphotransferase"/>
    <property type="match status" value="1"/>
</dbReference>
<dbReference type="Gene3D" id="3.30.420.40">
    <property type="match status" value="1"/>
</dbReference>
<dbReference type="Gene3D" id="3.40.367.20">
    <property type="match status" value="1"/>
</dbReference>
<dbReference type="InterPro" id="IPR043129">
    <property type="entry name" value="ATPase_NBD"/>
</dbReference>
<dbReference type="InterPro" id="IPR001312">
    <property type="entry name" value="Hexokinase"/>
</dbReference>
<dbReference type="InterPro" id="IPR019807">
    <property type="entry name" value="Hexokinase_BS"/>
</dbReference>
<dbReference type="InterPro" id="IPR022673">
    <property type="entry name" value="Hexokinase_C"/>
</dbReference>
<dbReference type="InterPro" id="IPR022672">
    <property type="entry name" value="Hexokinase_N"/>
</dbReference>
<dbReference type="PANTHER" id="PTHR19443">
    <property type="entry name" value="HEXOKINASE"/>
    <property type="match status" value="1"/>
</dbReference>
<dbReference type="PANTHER" id="PTHR19443:SF16">
    <property type="entry name" value="HEXOKINASE TYPE 1-RELATED"/>
    <property type="match status" value="1"/>
</dbReference>
<dbReference type="Pfam" id="PF00349">
    <property type="entry name" value="Hexokinase_1"/>
    <property type="match status" value="1"/>
</dbReference>
<dbReference type="Pfam" id="PF03727">
    <property type="entry name" value="Hexokinase_2"/>
    <property type="match status" value="1"/>
</dbReference>
<dbReference type="PRINTS" id="PR00475">
    <property type="entry name" value="HEXOKINASE"/>
</dbReference>
<dbReference type="SUPFAM" id="SSF53067">
    <property type="entry name" value="Actin-like ATPase domain"/>
    <property type="match status" value="2"/>
</dbReference>
<dbReference type="PROSITE" id="PS00378">
    <property type="entry name" value="HEXOKINASE_1"/>
    <property type="match status" value="1"/>
</dbReference>
<dbReference type="PROSITE" id="PS51748">
    <property type="entry name" value="HEXOKINASE_2"/>
    <property type="match status" value="1"/>
</dbReference>
<evidence type="ECO:0000250" key="1">
    <source>
        <dbReference type="UniProtKB" id="Q8LQ68"/>
    </source>
</evidence>
<evidence type="ECO:0000255" key="2"/>
<evidence type="ECO:0000255" key="3">
    <source>
        <dbReference type="PROSITE-ProRule" id="PRU01084"/>
    </source>
</evidence>
<evidence type="ECO:0000269" key="4">
    <source>
    </source>
</evidence>
<evidence type="ECO:0000269" key="5">
    <source>
    </source>
</evidence>
<evidence type="ECO:0000269" key="6">
    <source>
    </source>
</evidence>
<evidence type="ECO:0000269" key="7">
    <source>
    </source>
</evidence>
<evidence type="ECO:0000269" key="8">
    <source>
    </source>
</evidence>
<evidence type="ECO:0000269" key="9">
    <source>
    </source>
</evidence>
<evidence type="ECO:0000269" key="10">
    <source>
    </source>
</evidence>
<evidence type="ECO:0000269" key="11">
    <source>
    </source>
</evidence>
<evidence type="ECO:0000269" key="12">
    <source>
    </source>
</evidence>
<evidence type="ECO:0000269" key="13">
    <source>
    </source>
</evidence>
<evidence type="ECO:0000269" key="14">
    <source>
    </source>
</evidence>
<evidence type="ECO:0000303" key="15">
    <source>
    </source>
</evidence>
<evidence type="ECO:0000303" key="16">
    <source>
    </source>
</evidence>
<evidence type="ECO:0000305" key="17"/>
<evidence type="ECO:0000305" key="18">
    <source>
    </source>
</evidence>
<evidence type="ECO:0000312" key="19">
    <source>
        <dbReference type="Araport" id="AT4G29130"/>
    </source>
</evidence>
<evidence type="ECO:0000312" key="20">
    <source>
        <dbReference type="EMBL" id="CAB43927.1"/>
    </source>
</evidence>
<evidence type="ECO:0007744" key="21">
    <source>
        <dbReference type="PDB" id="4QS7"/>
    </source>
</evidence>
<evidence type="ECO:0007744" key="22">
    <source>
        <dbReference type="PDB" id="4QS9"/>
    </source>
</evidence>
<evidence type="ECO:0007829" key="23">
    <source>
        <dbReference type="PDB" id="4QS7"/>
    </source>
</evidence>
<evidence type="ECO:0007829" key="24">
    <source>
        <dbReference type="PDB" id="4QS8"/>
    </source>
</evidence>
<evidence type="ECO:0007829" key="25">
    <source>
        <dbReference type="PDB" id="4QS9"/>
    </source>
</evidence>